<keyword id="KW-0131">Cell cycle</keyword>
<keyword id="KW-0132">Cell division</keyword>
<keyword id="KW-0227">DNA damage</keyword>
<keyword id="KW-0717">Septation</keyword>
<keyword id="KW-0742">SOS response</keyword>
<comment type="function">
    <text evidence="1">Component of the SOS system and an inhibitor of cell division. Accumulation of SulA causes rapid cessation of cell division and the appearance of long, non-septate filaments. In the presence of GTP, binds a polymerization-competent form of FtsZ in a 1:1 ratio, thus inhibiting FtsZ polymerization and therefore preventing it from participating in the assembly of the Z ring. This mechanism prevents the premature segregation of damaged DNA to daughter cells during cell division.</text>
</comment>
<comment type="subunit">
    <text evidence="1">Interacts with FtsZ.</text>
</comment>
<comment type="induction">
    <text evidence="1">By DNA damage, as part of the SOS response.</text>
</comment>
<comment type="PTM">
    <text evidence="1">Is rapidly cleaved and degraded by the Lon protease once DNA damage is repaired.</text>
</comment>
<comment type="similarity">
    <text evidence="1">Belongs to the SulA family.</text>
</comment>
<evidence type="ECO:0000255" key="1">
    <source>
        <dbReference type="HAMAP-Rule" id="MF_01179"/>
    </source>
</evidence>
<evidence type="ECO:0000256" key="2">
    <source>
        <dbReference type="SAM" id="MobiDB-lite"/>
    </source>
</evidence>
<gene>
    <name evidence="1" type="primary">sulA</name>
    <name type="ordered locus">KPN78578_09620</name>
    <name type="ORF">KPN_00987</name>
</gene>
<proteinExistence type="inferred from homology"/>
<protein>
    <recommendedName>
        <fullName evidence="1">Cell division inhibitor SulA</fullName>
    </recommendedName>
</protein>
<feature type="chain" id="PRO_0000343967" description="Cell division inhibitor SulA">
    <location>
        <begin position="1"/>
        <end position="169"/>
    </location>
</feature>
<feature type="region of interest" description="Disordered" evidence="2">
    <location>
        <begin position="1"/>
        <end position="26"/>
    </location>
</feature>
<feature type="region of interest" description="FtsZ binding" evidence="1">
    <location>
        <begin position="106"/>
        <end position="112"/>
    </location>
</feature>
<feature type="region of interest" description="Lon protease binding" evidence="1">
    <location>
        <begin position="162"/>
        <end position="169"/>
    </location>
</feature>
<feature type="compositionally biased region" description="Polar residues" evidence="2">
    <location>
        <begin position="1"/>
        <end position="13"/>
    </location>
</feature>
<feature type="site" description="Essential for degradation by Lon protease" evidence="1">
    <location>
        <position position="169"/>
    </location>
</feature>
<sequence>MFTSAHANRSAQASAPAGHYAHRSGEQNTNGLISEIVYREDQPMMTQLLLLPLLQQLGQQSRWQLWLTPQQKLSREWVQSAGLPLSKVMQISQLSPSHTIDSMIRALRTGNYSVVICWLAEELTADEHERLVNAAQVGSAMGFIMRPVRNQGTLGRQLSGLKIHSNLYH</sequence>
<organism>
    <name type="scientific">Klebsiella pneumoniae subsp. pneumoniae (strain ATCC 700721 / MGH 78578)</name>
    <dbReference type="NCBI Taxonomy" id="272620"/>
    <lineage>
        <taxon>Bacteria</taxon>
        <taxon>Pseudomonadati</taxon>
        <taxon>Pseudomonadota</taxon>
        <taxon>Gammaproteobacteria</taxon>
        <taxon>Enterobacterales</taxon>
        <taxon>Enterobacteriaceae</taxon>
        <taxon>Klebsiella/Raoultella group</taxon>
        <taxon>Klebsiella</taxon>
        <taxon>Klebsiella pneumoniae complex</taxon>
    </lineage>
</organism>
<dbReference type="EMBL" id="CP000647">
    <property type="protein sequence ID" value="ABR76423.1"/>
    <property type="molecule type" value="Genomic_DNA"/>
</dbReference>
<dbReference type="RefSeq" id="WP_002898418.1">
    <property type="nucleotide sequence ID" value="NC_009648.1"/>
</dbReference>
<dbReference type="SMR" id="A6T752"/>
<dbReference type="STRING" id="272620.KPN_00987"/>
<dbReference type="PaxDb" id="272620-KPN_00987"/>
<dbReference type="EnsemblBacteria" id="ABR76423">
    <property type="protein sequence ID" value="ABR76423"/>
    <property type="gene ID" value="KPN_00987"/>
</dbReference>
<dbReference type="KEGG" id="kpn:KPN_00987"/>
<dbReference type="HOGENOM" id="CLU_118972_1_0_6"/>
<dbReference type="Proteomes" id="UP000000265">
    <property type="component" value="Chromosome"/>
</dbReference>
<dbReference type="GO" id="GO:0000917">
    <property type="term" value="P:division septum assembly"/>
    <property type="evidence" value="ECO:0007669"/>
    <property type="project" value="UniProtKB-KW"/>
</dbReference>
<dbReference type="GO" id="GO:0006281">
    <property type="term" value="P:DNA repair"/>
    <property type="evidence" value="ECO:0007669"/>
    <property type="project" value="TreeGrafter"/>
</dbReference>
<dbReference type="GO" id="GO:0051782">
    <property type="term" value="P:negative regulation of cell division"/>
    <property type="evidence" value="ECO:0007669"/>
    <property type="project" value="UniProtKB-UniRule"/>
</dbReference>
<dbReference type="GO" id="GO:0009432">
    <property type="term" value="P:SOS response"/>
    <property type="evidence" value="ECO:0007669"/>
    <property type="project" value="UniProtKB-UniRule"/>
</dbReference>
<dbReference type="FunFam" id="3.40.50.300:FF:000417">
    <property type="entry name" value="Cell division inhibitor SulA"/>
    <property type="match status" value="1"/>
</dbReference>
<dbReference type="Gene3D" id="3.40.50.300">
    <property type="entry name" value="P-loop containing nucleotide triphosphate hydrolases"/>
    <property type="match status" value="1"/>
</dbReference>
<dbReference type="HAMAP" id="MF_01179">
    <property type="entry name" value="SulA"/>
    <property type="match status" value="1"/>
</dbReference>
<dbReference type="InterPro" id="IPR004596">
    <property type="entry name" value="Cell_div_suppressor_SulA"/>
</dbReference>
<dbReference type="InterPro" id="IPR027417">
    <property type="entry name" value="P-loop_NTPase"/>
</dbReference>
<dbReference type="InterPro" id="IPR050356">
    <property type="entry name" value="SulA_CellDiv_inhibitor"/>
</dbReference>
<dbReference type="InterPro" id="IPR047696">
    <property type="entry name" value="SulA_enterobact"/>
</dbReference>
<dbReference type="NCBIfam" id="NF007892">
    <property type="entry name" value="PRK10595.1"/>
    <property type="match status" value="1"/>
</dbReference>
<dbReference type="NCBIfam" id="TIGR00623">
    <property type="entry name" value="SOS_SulA_coli"/>
    <property type="match status" value="1"/>
</dbReference>
<dbReference type="PANTHER" id="PTHR35369">
    <property type="entry name" value="BLR3025 PROTEIN-RELATED"/>
    <property type="match status" value="1"/>
</dbReference>
<dbReference type="PANTHER" id="PTHR35369:SF4">
    <property type="entry name" value="CELL DIVISION INHIBITOR SULA"/>
    <property type="match status" value="1"/>
</dbReference>
<dbReference type="Pfam" id="PF03846">
    <property type="entry name" value="SulA"/>
    <property type="match status" value="1"/>
</dbReference>
<dbReference type="PIRSF" id="PIRSF003093">
    <property type="entry name" value="SulA"/>
    <property type="match status" value="1"/>
</dbReference>
<dbReference type="SUPFAM" id="SSF52540">
    <property type="entry name" value="P-loop containing nucleoside triphosphate hydrolases"/>
    <property type="match status" value="1"/>
</dbReference>
<name>SULA_KLEP7</name>
<reference key="1">
    <citation type="submission" date="2006-09" db="EMBL/GenBank/DDBJ databases">
        <authorList>
            <consortium name="The Klebsiella pneumonia Genome Sequencing Project"/>
            <person name="McClelland M."/>
            <person name="Sanderson E.K."/>
            <person name="Spieth J."/>
            <person name="Clifton W.S."/>
            <person name="Latreille P."/>
            <person name="Sabo A."/>
            <person name="Pepin K."/>
            <person name="Bhonagiri V."/>
            <person name="Porwollik S."/>
            <person name="Ali J."/>
            <person name="Wilson R.K."/>
        </authorList>
    </citation>
    <scope>NUCLEOTIDE SEQUENCE [LARGE SCALE GENOMIC DNA]</scope>
    <source>
        <strain>ATCC 700721 / MGH 78578</strain>
    </source>
</reference>
<accession>A6T752</accession>